<sequence length="379" mass="40969">MKLIIAGGGTGGHLFPGIAVAEEFLSRDPANQVLFVGTERGIEARAVPAAGFPLELISAAGIRGKGGLGKLRGAAMMFNGYRQSCRLLDRFRPDAVLGVGGYASLPMLLAARTRQVPSFIHEQNAVPGMTNRLLSRFADRIFITLEESSRFFAGRRTLLTGNPLRRQILDRLGTRDQGPGIRDQEKHMTDSTGPASRVPGPRFNLLVFGGSQGAHAINMAMVAALPLLKRASVRLGITHQTGESDRERVAAAYRSAGVEARVLPFIADMASEYARADLVVCRAGATTIAEVTALAKACLFIPFPYAVDDHQRRNAEALLRQSACFMLLERELSAERLAALILQLAGDPRLVRRTGELAFSMARLDAARIIVDEILTPTN</sequence>
<organism>
    <name type="scientific">Pelobacter propionicus (strain DSM 2379 / NBRC 103807 / OttBd1)</name>
    <dbReference type="NCBI Taxonomy" id="338966"/>
    <lineage>
        <taxon>Bacteria</taxon>
        <taxon>Pseudomonadati</taxon>
        <taxon>Thermodesulfobacteriota</taxon>
        <taxon>Desulfuromonadia</taxon>
        <taxon>Desulfuromonadales</taxon>
        <taxon>Desulfuromonadaceae</taxon>
        <taxon>Pelobacter</taxon>
    </lineage>
</organism>
<dbReference type="EC" id="2.4.1.227" evidence="1"/>
<dbReference type="EMBL" id="CP000482">
    <property type="protein sequence ID" value="ABL00882.1"/>
    <property type="molecule type" value="Genomic_DNA"/>
</dbReference>
<dbReference type="RefSeq" id="WP_011737099.1">
    <property type="nucleotide sequence ID" value="NC_008609.1"/>
</dbReference>
<dbReference type="SMR" id="A1AU61"/>
<dbReference type="STRING" id="338966.Ppro_3289"/>
<dbReference type="CAZy" id="GT28">
    <property type="family name" value="Glycosyltransferase Family 28"/>
</dbReference>
<dbReference type="KEGG" id="ppd:Ppro_3289"/>
<dbReference type="eggNOG" id="COG0707">
    <property type="taxonomic scope" value="Bacteria"/>
</dbReference>
<dbReference type="HOGENOM" id="CLU_037404_0_1_7"/>
<dbReference type="OrthoDB" id="9808936at2"/>
<dbReference type="UniPathway" id="UPA00219"/>
<dbReference type="Proteomes" id="UP000006732">
    <property type="component" value="Chromosome"/>
</dbReference>
<dbReference type="GO" id="GO:0005886">
    <property type="term" value="C:plasma membrane"/>
    <property type="evidence" value="ECO:0007669"/>
    <property type="project" value="UniProtKB-SubCell"/>
</dbReference>
<dbReference type="GO" id="GO:0051991">
    <property type="term" value="F:UDP-N-acetyl-D-glucosamine:N-acetylmuramoyl-L-alanyl-D-glutamyl-meso-2,6-diaminopimelyl-D-alanyl-D-alanine-diphosphoundecaprenol 4-beta-N-acetylglucosaminlytransferase activity"/>
    <property type="evidence" value="ECO:0007669"/>
    <property type="project" value="RHEA"/>
</dbReference>
<dbReference type="GO" id="GO:0050511">
    <property type="term" value="F:undecaprenyldiphospho-muramoylpentapeptide beta-N-acetylglucosaminyltransferase activity"/>
    <property type="evidence" value="ECO:0007669"/>
    <property type="project" value="UniProtKB-UniRule"/>
</dbReference>
<dbReference type="GO" id="GO:0005975">
    <property type="term" value="P:carbohydrate metabolic process"/>
    <property type="evidence" value="ECO:0007669"/>
    <property type="project" value="InterPro"/>
</dbReference>
<dbReference type="GO" id="GO:0051301">
    <property type="term" value="P:cell division"/>
    <property type="evidence" value="ECO:0007669"/>
    <property type="project" value="UniProtKB-KW"/>
</dbReference>
<dbReference type="GO" id="GO:0071555">
    <property type="term" value="P:cell wall organization"/>
    <property type="evidence" value="ECO:0007669"/>
    <property type="project" value="UniProtKB-KW"/>
</dbReference>
<dbReference type="GO" id="GO:0030259">
    <property type="term" value="P:lipid glycosylation"/>
    <property type="evidence" value="ECO:0007669"/>
    <property type="project" value="UniProtKB-UniRule"/>
</dbReference>
<dbReference type="GO" id="GO:0009252">
    <property type="term" value="P:peptidoglycan biosynthetic process"/>
    <property type="evidence" value="ECO:0007669"/>
    <property type="project" value="UniProtKB-UniRule"/>
</dbReference>
<dbReference type="GO" id="GO:0008360">
    <property type="term" value="P:regulation of cell shape"/>
    <property type="evidence" value="ECO:0007669"/>
    <property type="project" value="UniProtKB-KW"/>
</dbReference>
<dbReference type="CDD" id="cd03785">
    <property type="entry name" value="GT28_MurG"/>
    <property type="match status" value="1"/>
</dbReference>
<dbReference type="Gene3D" id="3.40.50.2000">
    <property type="entry name" value="Glycogen Phosphorylase B"/>
    <property type="match status" value="2"/>
</dbReference>
<dbReference type="HAMAP" id="MF_00033">
    <property type="entry name" value="MurG"/>
    <property type="match status" value="1"/>
</dbReference>
<dbReference type="InterPro" id="IPR006009">
    <property type="entry name" value="GlcNAc_MurG"/>
</dbReference>
<dbReference type="InterPro" id="IPR007235">
    <property type="entry name" value="Glyco_trans_28_C"/>
</dbReference>
<dbReference type="InterPro" id="IPR004276">
    <property type="entry name" value="GlycoTrans_28_N"/>
</dbReference>
<dbReference type="NCBIfam" id="TIGR01133">
    <property type="entry name" value="murG"/>
    <property type="match status" value="1"/>
</dbReference>
<dbReference type="PANTHER" id="PTHR21015:SF22">
    <property type="entry name" value="GLYCOSYLTRANSFERASE"/>
    <property type="match status" value="1"/>
</dbReference>
<dbReference type="PANTHER" id="PTHR21015">
    <property type="entry name" value="UDP-N-ACETYLGLUCOSAMINE--N-ACETYLMURAMYL-(PENTAPEPTIDE) PYROPHOSPHORYL-UNDECAPRENOL N-ACETYLGLUCOSAMINE TRANSFERASE 1"/>
    <property type="match status" value="1"/>
</dbReference>
<dbReference type="Pfam" id="PF04101">
    <property type="entry name" value="Glyco_tran_28_C"/>
    <property type="match status" value="1"/>
</dbReference>
<dbReference type="Pfam" id="PF03033">
    <property type="entry name" value="Glyco_transf_28"/>
    <property type="match status" value="1"/>
</dbReference>
<dbReference type="SUPFAM" id="SSF53756">
    <property type="entry name" value="UDP-Glycosyltransferase/glycogen phosphorylase"/>
    <property type="match status" value="1"/>
</dbReference>
<keyword id="KW-0131">Cell cycle</keyword>
<keyword id="KW-0132">Cell division</keyword>
<keyword id="KW-0997">Cell inner membrane</keyword>
<keyword id="KW-1003">Cell membrane</keyword>
<keyword id="KW-0133">Cell shape</keyword>
<keyword id="KW-0961">Cell wall biogenesis/degradation</keyword>
<keyword id="KW-0328">Glycosyltransferase</keyword>
<keyword id="KW-0472">Membrane</keyword>
<keyword id="KW-0573">Peptidoglycan synthesis</keyword>
<keyword id="KW-1185">Reference proteome</keyword>
<keyword id="KW-0808">Transferase</keyword>
<evidence type="ECO:0000255" key="1">
    <source>
        <dbReference type="HAMAP-Rule" id="MF_00033"/>
    </source>
</evidence>
<evidence type="ECO:0000256" key="2">
    <source>
        <dbReference type="SAM" id="MobiDB-lite"/>
    </source>
</evidence>
<reference key="1">
    <citation type="submission" date="2006-10" db="EMBL/GenBank/DDBJ databases">
        <title>Complete sequence of chromosome of Pelobacter propionicus DSM 2379.</title>
        <authorList>
            <consortium name="US DOE Joint Genome Institute"/>
            <person name="Copeland A."/>
            <person name="Lucas S."/>
            <person name="Lapidus A."/>
            <person name="Barry K."/>
            <person name="Detter J.C."/>
            <person name="Glavina del Rio T."/>
            <person name="Hammon N."/>
            <person name="Israni S."/>
            <person name="Dalin E."/>
            <person name="Tice H."/>
            <person name="Pitluck S."/>
            <person name="Saunders E."/>
            <person name="Brettin T."/>
            <person name="Bruce D."/>
            <person name="Han C."/>
            <person name="Tapia R."/>
            <person name="Schmutz J."/>
            <person name="Larimer F."/>
            <person name="Land M."/>
            <person name="Hauser L."/>
            <person name="Kyrpides N."/>
            <person name="Kim E."/>
            <person name="Lovley D."/>
            <person name="Richardson P."/>
        </authorList>
    </citation>
    <scope>NUCLEOTIDE SEQUENCE [LARGE SCALE GENOMIC DNA]</scope>
    <source>
        <strain>DSM 2379 / NBRC 103807 / OttBd1</strain>
    </source>
</reference>
<accession>A1AU61</accession>
<comment type="function">
    <text evidence="1">Cell wall formation. Catalyzes the transfer of a GlcNAc subunit on undecaprenyl-pyrophosphoryl-MurNAc-pentapeptide (lipid intermediate I) to form undecaprenyl-pyrophosphoryl-MurNAc-(pentapeptide)GlcNAc (lipid intermediate II).</text>
</comment>
<comment type="catalytic activity">
    <reaction evidence="1">
        <text>di-trans,octa-cis-undecaprenyl diphospho-N-acetyl-alpha-D-muramoyl-L-alanyl-D-glutamyl-meso-2,6-diaminopimeloyl-D-alanyl-D-alanine + UDP-N-acetyl-alpha-D-glucosamine = di-trans,octa-cis-undecaprenyl diphospho-[N-acetyl-alpha-D-glucosaminyl-(1-&gt;4)]-N-acetyl-alpha-D-muramoyl-L-alanyl-D-glutamyl-meso-2,6-diaminopimeloyl-D-alanyl-D-alanine + UDP + H(+)</text>
        <dbReference type="Rhea" id="RHEA:31227"/>
        <dbReference type="ChEBI" id="CHEBI:15378"/>
        <dbReference type="ChEBI" id="CHEBI:57705"/>
        <dbReference type="ChEBI" id="CHEBI:58223"/>
        <dbReference type="ChEBI" id="CHEBI:61387"/>
        <dbReference type="ChEBI" id="CHEBI:61388"/>
        <dbReference type="EC" id="2.4.1.227"/>
    </reaction>
</comment>
<comment type="pathway">
    <text evidence="1">Cell wall biogenesis; peptidoglycan biosynthesis.</text>
</comment>
<comment type="subcellular location">
    <subcellularLocation>
        <location evidence="1">Cell inner membrane</location>
        <topology evidence="1">Peripheral membrane protein</topology>
        <orientation evidence="1">Cytoplasmic side</orientation>
    </subcellularLocation>
</comment>
<comment type="similarity">
    <text evidence="1">Belongs to the glycosyltransferase 28 family. MurG subfamily.</text>
</comment>
<gene>
    <name evidence="1" type="primary">murG</name>
    <name type="ordered locus">Ppro_3289</name>
</gene>
<name>MURG_PELPD</name>
<feature type="chain" id="PRO_1000002678" description="UDP-N-acetylglucosamine--N-acetylmuramyl-(pentapeptide) pyrophosphoryl-undecaprenol N-acetylglucosamine transferase">
    <location>
        <begin position="1"/>
        <end position="379"/>
    </location>
</feature>
<feature type="region of interest" description="Disordered" evidence="2">
    <location>
        <begin position="174"/>
        <end position="195"/>
    </location>
</feature>
<feature type="binding site" evidence="1">
    <location>
        <begin position="10"/>
        <end position="12"/>
    </location>
    <ligand>
        <name>UDP-N-acetyl-alpha-D-glucosamine</name>
        <dbReference type="ChEBI" id="CHEBI:57705"/>
    </ligand>
</feature>
<feature type="binding site" evidence="1">
    <location>
        <position position="124"/>
    </location>
    <ligand>
        <name>UDP-N-acetyl-alpha-D-glucosamine</name>
        <dbReference type="ChEBI" id="CHEBI:57705"/>
    </ligand>
</feature>
<feature type="binding site" evidence="1">
    <location>
        <position position="165"/>
    </location>
    <ligand>
        <name>UDP-N-acetyl-alpha-D-glucosamine</name>
        <dbReference type="ChEBI" id="CHEBI:57705"/>
    </ligand>
</feature>
<feature type="binding site" evidence="1">
    <location>
        <position position="211"/>
    </location>
    <ligand>
        <name>UDP-N-acetyl-alpha-D-glucosamine</name>
        <dbReference type="ChEBI" id="CHEBI:57705"/>
    </ligand>
</feature>
<feature type="binding site" evidence="1">
    <location>
        <position position="266"/>
    </location>
    <ligand>
        <name>UDP-N-acetyl-alpha-D-glucosamine</name>
        <dbReference type="ChEBI" id="CHEBI:57705"/>
    </ligand>
</feature>
<feature type="binding site" evidence="1">
    <location>
        <position position="311"/>
    </location>
    <ligand>
        <name>UDP-N-acetyl-alpha-D-glucosamine</name>
        <dbReference type="ChEBI" id="CHEBI:57705"/>
    </ligand>
</feature>
<proteinExistence type="inferred from homology"/>
<protein>
    <recommendedName>
        <fullName evidence="1">UDP-N-acetylglucosamine--N-acetylmuramyl-(pentapeptide) pyrophosphoryl-undecaprenol N-acetylglucosamine transferase</fullName>
        <ecNumber evidence="1">2.4.1.227</ecNumber>
    </recommendedName>
    <alternativeName>
        <fullName evidence="1">Undecaprenyl-PP-MurNAc-pentapeptide-UDPGlcNAc GlcNAc transferase</fullName>
    </alternativeName>
</protein>